<keyword id="KW-1185">Reference proteome</keyword>
<keyword id="KW-0687">Ribonucleoprotein</keyword>
<keyword id="KW-0689">Ribosomal protein</keyword>
<name>RL27_CHLL3</name>
<feature type="chain" id="PRO_1000017543" description="Large ribosomal subunit protein bL27">
    <location>
        <begin position="1"/>
        <end position="84"/>
    </location>
</feature>
<feature type="region of interest" description="Disordered" evidence="2">
    <location>
        <begin position="1"/>
        <end position="21"/>
    </location>
</feature>
<dbReference type="EMBL" id="CP000096">
    <property type="protein sequence ID" value="ABB24366.1"/>
    <property type="molecule type" value="Genomic_DNA"/>
</dbReference>
<dbReference type="RefSeq" id="WP_011358238.1">
    <property type="nucleotide sequence ID" value="NC_007512.1"/>
</dbReference>
<dbReference type="SMR" id="Q3B2R5"/>
<dbReference type="STRING" id="319225.Plut_1509"/>
<dbReference type="KEGG" id="plt:Plut_1509"/>
<dbReference type="eggNOG" id="COG0211">
    <property type="taxonomic scope" value="Bacteria"/>
</dbReference>
<dbReference type="HOGENOM" id="CLU_095424_4_0_10"/>
<dbReference type="OrthoDB" id="9803474at2"/>
<dbReference type="Proteomes" id="UP000002709">
    <property type="component" value="Chromosome"/>
</dbReference>
<dbReference type="GO" id="GO:1990904">
    <property type="term" value="C:ribonucleoprotein complex"/>
    <property type="evidence" value="ECO:0007669"/>
    <property type="project" value="UniProtKB-KW"/>
</dbReference>
<dbReference type="GO" id="GO:0005840">
    <property type="term" value="C:ribosome"/>
    <property type="evidence" value="ECO:0007669"/>
    <property type="project" value="UniProtKB-KW"/>
</dbReference>
<dbReference type="GO" id="GO:0003735">
    <property type="term" value="F:structural constituent of ribosome"/>
    <property type="evidence" value="ECO:0007669"/>
    <property type="project" value="InterPro"/>
</dbReference>
<dbReference type="GO" id="GO:0006412">
    <property type="term" value="P:translation"/>
    <property type="evidence" value="ECO:0007669"/>
    <property type="project" value="UniProtKB-UniRule"/>
</dbReference>
<dbReference type="FunFam" id="2.40.50.100:FF:000020">
    <property type="entry name" value="50S ribosomal protein L27"/>
    <property type="match status" value="1"/>
</dbReference>
<dbReference type="Gene3D" id="2.40.50.100">
    <property type="match status" value="1"/>
</dbReference>
<dbReference type="HAMAP" id="MF_00539">
    <property type="entry name" value="Ribosomal_bL27"/>
    <property type="match status" value="1"/>
</dbReference>
<dbReference type="InterPro" id="IPR001684">
    <property type="entry name" value="Ribosomal_bL27"/>
</dbReference>
<dbReference type="InterPro" id="IPR018261">
    <property type="entry name" value="Ribosomal_bL27_CS"/>
</dbReference>
<dbReference type="NCBIfam" id="TIGR00062">
    <property type="entry name" value="L27"/>
    <property type="match status" value="1"/>
</dbReference>
<dbReference type="PANTHER" id="PTHR15893:SF0">
    <property type="entry name" value="LARGE RIBOSOMAL SUBUNIT PROTEIN BL27M"/>
    <property type="match status" value="1"/>
</dbReference>
<dbReference type="PANTHER" id="PTHR15893">
    <property type="entry name" value="RIBOSOMAL PROTEIN L27"/>
    <property type="match status" value="1"/>
</dbReference>
<dbReference type="Pfam" id="PF01016">
    <property type="entry name" value="Ribosomal_L27"/>
    <property type="match status" value="1"/>
</dbReference>
<dbReference type="PRINTS" id="PR00063">
    <property type="entry name" value="RIBOSOMALL27"/>
</dbReference>
<dbReference type="SUPFAM" id="SSF110324">
    <property type="entry name" value="Ribosomal L27 protein-like"/>
    <property type="match status" value="1"/>
</dbReference>
<dbReference type="PROSITE" id="PS00831">
    <property type="entry name" value="RIBOSOMAL_L27"/>
    <property type="match status" value="1"/>
</dbReference>
<protein>
    <recommendedName>
        <fullName evidence="1">Large ribosomal subunit protein bL27</fullName>
    </recommendedName>
    <alternativeName>
        <fullName evidence="3">50S ribosomal protein L27</fullName>
    </alternativeName>
</protein>
<organism>
    <name type="scientific">Chlorobium luteolum (strain DSM 273 / BCRC 81028 / 2530)</name>
    <name type="common">Pelodictyon luteolum</name>
    <dbReference type="NCBI Taxonomy" id="319225"/>
    <lineage>
        <taxon>Bacteria</taxon>
        <taxon>Pseudomonadati</taxon>
        <taxon>Chlorobiota</taxon>
        <taxon>Chlorobiia</taxon>
        <taxon>Chlorobiales</taxon>
        <taxon>Chlorobiaceae</taxon>
        <taxon>Chlorobium/Pelodictyon group</taxon>
        <taxon>Pelodictyon</taxon>
    </lineage>
</organism>
<sequence length="84" mass="8746">MAHKKGGGSTKNGRDSNPKYLGVKAAGGSTVSAGTIILRQRGTVIKPGTNAGIGRDHTIFSLVDGVVTFRNGRNNKKQVDILPS</sequence>
<proteinExistence type="inferred from homology"/>
<evidence type="ECO:0000255" key="1">
    <source>
        <dbReference type="HAMAP-Rule" id="MF_00539"/>
    </source>
</evidence>
<evidence type="ECO:0000256" key="2">
    <source>
        <dbReference type="SAM" id="MobiDB-lite"/>
    </source>
</evidence>
<evidence type="ECO:0000305" key="3"/>
<gene>
    <name evidence="1" type="primary">rpmA</name>
    <name type="ordered locus">Plut_1509</name>
</gene>
<accession>Q3B2R5</accession>
<reference key="1">
    <citation type="submission" date="2005-08" db="EMBL/GenBank/DDBJ databases">
        <title>Complete sequence of Pelodictyon luteolum DSM 273.</title>
        <authorList>
            <consortium name="US DOE Joint Genome Institute"/>
            <person name="Copeland A."/>
            <person name="Lucas S."/>
            <person name="Lapidus A."/>
            <person name="Barry K."/>
            <person name="Detter J.C."/>
            <person name="Glavina T."/>
            <person name="Hammon N."/>
            <person name="Israni S."/>
            <person name="Pitluck S."/>
            <person name="Bryant D."/>
            <person name="Schmutz J."/>
            <person name="Larimer F."/>
            <person name="Land M."/>
            <person name="Kyrpides N."/>
            <person name="Ivanova N."/>
            <person name="Richardson P."/>
        </authorList>
    </citation>
    <scope>NUCLEOTIDE SEQUENCE [LARGE SCALE GENOMIC DNA]</scope>
    <source>
        <strain>DSM 273 / BCRC 81028 / 2530</strain>
    </source>
</reference>
<comment type="similarity">
    <text evidence="1">Belongs to the bacterial ribosomal protein bL27 family.</text>
</comment>